<organism>
    <name type="scientific">Xylella fastidiosa (strain 9a5c)</name>
    <dbReference type="NCBI Taxonomy" id="160492"/>
    <lineage>
        <taxon>Bacteria</taxon>
        <taxon>Pseudomonadati</taxon>
        <taxon>Pseudomonadota</taxon>
        <taxon>Gammaproteobacteria</taxon>
        <taxon>Lysobacterales</taxon>
        <taxon>Lysobacteraceae</taxon>
        <taxon>Xylella</taxon>
    </lineage>
</organism>
<dbReference type="EMBL" id="AE003849">
    <property type="protein sequence ID" value="AAF84061.1"/>
    <property type="molecule type" value="Genomic_DNA"/>
</dbReference>
<dbReference type="PIR" id="D82704">
    <property type="entry name" value="D82704"/>
</dbReference>
<dbReference type="RefSeq" id="WP_010893758.1">
    <property type="nucleotide sequence ID" value="NC_002488.3"/>
</dbReference>
<dbReference type="SMR" id="Q9PDX7"/>
<dbReference type="STRING" id="160492.XF_1252"/>
<dbReference type="MEROPS" id="I39.008"/>
<dbReference type="KEGG" id="xfa:XF_1252"/>
<dbReference type="eggNOG" id="COG2373">
    <property type="taxonomic scope" value="Bacteria"/>
</dbReference>
<dbReference type="HOGENOM" id="CLU_000965_1_0_6"/>
<dbReference type="Proteomes" id="UP000000812">
    <property type="component" value="Chromosome"/>
</dbReference>
<dbReference type="GO" id="GO:0005886">
    <property type="term" value="C:plasma membrane"/>
    <property type="evidence" value="ECO:0007669"/>
    <property type="project" value="UniProtKB-SubCell"/>
</dbReference>
<dbReference type="GO" id="GO:0004866">
    <property type="term" value="F:endopeptidase inhibitor activity"/>
    <property type="evidence" value="ECO:0007669"/>
    <property type="project" value="InterPro"/>
</dbReference>
<dbReference type="CDD" id="cd02891">
    <property type="entry name" value="A2M_like"/>
    <property type="match status" value="1"/>
</dbReference>
<dbReference type="Gene3D" id="1.50.10.20">
    <property type="match status" value="1"/>
</dbReference>
<dbReference type="Gene3D" id="2.60.40.1930">
    <property type="match status" value="1"/>
</dbReference>
<dbReference type="InterPro" id="IPR049120">
    <property type="entry name" value="A2M_bMG2"/>
</dbReference>
<dbReference type="InterPro" id="IPR011625">
    <property type="entry name" value="A2M_N_BRD"/>
</dbReference>
<dbReference type="InterPro" id="IPR040639">
    <property type="entry name" value="A2MG_MG1"/>
</dbReference>
<dbReference type="InterPro" id="IPR026284">
    <property type="entry name" value="A2MG_proteobact"/>
</dbReference>
<dbReference type="InterPro" id="IPR021868">
    <property type="entry name" value="Alpha_2_Macroglob_MG3"/>
</dbReference>
<dbReference type="InterPro" id="IPR041203">
    <property type="entry name" value="Bact_A2M_MG5"/>
</dbReference>
<dbReference type="InterPro" id="IPR041462">
    <property type="entry name" value="Bact_A2M_MG6"/>
</dbReference>
<dbReference type="InterPro" id="IPR041246">
    <property type="entry name" value="Bact_MG10"/>
</dbReference>
<dbReference type="InterPro" id="IPR001599">
    <property type="entry name" value="Macroglobln_a2"/>
</dbReference>
<dbReference type="InterPro" id="IPR002890">
    <property type="entry name" value="MG2"/>
</dbReference>
<dbReference type="InterPro" id="IPR008930">
    <property type="entry name" value="Terpenoid_cyclase/PrenylTrfase"/>
</dbReference>
<dbReference type="InterPro" id="IPR051802">
    <property type="entry name" value="YfhM-like"/>
</dbReference>
<dbReference type="PANTHER" id="PTHR40094">
    <property type="entry name" value="ALPHA-2-MACROGLOBULIN HOMOLOG"/>
    <property type="match status" value="1"/>
</dbReference>
<dbReference type="PANTHER" id="PTHR40094:SF1">
    <property type="entry name" value="UBIQUITIN DOMAIN-CONTAINING PROTEIN"/>
    <property type="match status" value="1"/>
</dbReference>
<dbReference type="Pfam" id="PF00207">
    <property type="entry name" value="A2M"/>
    <property type="match status" value="1"/>
</dbReference>
<dbReference type="Pfam" id="PF21142">
    <property type="entry name" value="A2M_bMG2"/>
    <property type="match status" value="1"/>
</dbReference>
<dbReference type="Pfam" id="PF07703">
    <property type="entry name" value="A2M_BRD"/>
    <property type="match status" value="1"/>
</dbReference>
<dbReference type="Pfam" id="PF17970">
    <property type="entry name" value="bMG1"/>
    <property type="match status" value="1"/>
</dbReference>
<dbReference type="Pfam" id="PF17973">
    <property type="entry name" value="bMG10"/>
    <property type="match status" value="1"/>
</dbReference>
<dbReference type="Pfam" id="PF11974">
    <property type="entry name" value="bMG3"/>
    <property type="match status" value="1"/>
</dbReference>
<dbReference type="Pfam" id="PF17972">
    <property type="entry name" value="bMG5"/>
    <property type="match status" value="1"/>
</dbReference>
<dbReference type="Pfam" id="PF17962">
    <property type="entry name" value="bMG6"/>
    <property type="match status" value="1"/>
</dbReference>
<dbReference type="Pfam" id="PF01835">
    <property type="entry name" value="MG2"/>
    <property type="match status" value="1"/>
</dbReference>
<dbReference type="PIRSF" id="PIRSF038980">
    <property type="entry name" value="A2M_bac"/>
    <property type="match status" value="1"/>
</dbReference>
<dbReference type="SMART" id="SM01360">
    <property type="entry name" value="A2M"/>
    <property type="match status" value="1"/>
</dbReference>
<dbReference type="SMART" id="SM01359">
    <property type="entry name" value="A2M_N_2"/>
    <property type="match status" value="1"/>
</dbReference>
<dbReference type="SUPFAM" id="SSF48239">
    <property type="entry name" value="Terpenoid cyclases/Protein prenyltransferases"/>
    <property type="match status" value="1"/>
</dbReference>
<dbReference type="PROSITE" id="PS51257">
    <property type="entry name" value="PROKAR_LIPOPROTEIN"/>
    <property type="match status" value="1"/>
</dbReference>
<gene>
    <name type="ordered locus">XF_1252</name>
</gene>
<sequence length="1641" mass="178922">MRDRVAMMLRPLVRGWIPRAVLLLTVAFSFGCNRNHNGQLPQSSGEPVAVAKEPVKGFVLVRAYPDQHDGELALALEFSQPLAATQEFDTLVRLEQDSGNHDGGWSLSDDAKTLRYPYVEADKHYTVLISAGLLAATGSRLGKPRKEPVYTGELDPVVGFASRGSILPARGSRGVPVVSVNVPEVDVEFMRVREKALPAFLARYHKAGQRSSWELSNQGNSRKRLSELADPVYVTRFVLDGKKNERALTYLPIQSIRELREPGLYFAVMKPTGSFSDAFETAFFSVSNIGLHTRAYKDKLFVHTASLRSGNPYKQVDLLVLDAKGETVLQGATDDNGNALLNYTLNAGHVLVSRNGRDISILPFNQPALDLSEFAVAGRENPWFDVFAWSGRDLYRPGETLRISALLRDRDGKPVKPQPVFLRLKQPDGKTFRETRLQPAEQGYLEFTQKIPSDAPTGRWRVEFRTDPASKEAVQGLAVRVEEFLPERMKLELSSAQPVLRAKAPFTLTADAAYLYGAPAAGNRFTANLAVAVEQHPLDNMPGWFFGDATLQLPRGAKETIDITLGADGHLVHDIVLPEEAKPVSPMAVVVSGSVYESGGRPVTRSLKRVLWPADALVGVRPLFDVASGADANGMARFELTRVGVDGKPQSAKGLKATLVRELRDYHWRYSDGRWDYDFTRRFENKETRTVDISTSHTTTLALPVEWGDYRLEVFDPVTGLTMRYPFRAGWSWGDDNRGLDARPDKVKLALDKTSYRAGDTLKVTITPPHPGKGLLLVESDKPLYVQAIDANPSTTLEIPVTADWERHDVYVTALVFRGGSASNNTTPARAVGEVYVPMQRKDRRVAVGLVVPKQMRPAQSLPVTVSVPELAGKQAHVTISAVDAGILNITGFPVPDAAAHFFAQRRLSVDAYDIYGRVIESFEGGTGRLKFGGDMALPPLPQAKRPTARSQTVDLFSGAVKLDAKGNAHIQLPVPDFNGALRVSALVYSDTRYGQRDAETVVRAPILAEASMPRVMAPGDRSTVTVDVQNFTGKQGKFAVKVEGVGPLAVAEAGRSVTLGIDGKTTLNFPLRALEGNSVAQVRVRVEGNGSKAERHYDLPVRAAWPQGLRTQAHVLNVLAPIAFDPALAKGLMPDSVNARLSVSALAPIPFASVLQGVFEYPYGCAEQTASKGYAALWLDDATIKSLGIHGVTPAQRLERLEGALGRLASLQTMNGHFSMCGGNSDVNPVLTPYIAGFLLDAKDAGFAVSDAVLQKALNRLSEDLLSGAHLFYGNDQSEALMFAHQAWSGYVLARVNRAPLGTLRTLYDNERGKAVSGLSLVHLGVALSLQGDRKRGEAAIEAGFAKSEGGRPEVFGDYGSVIRDNALMIALVRAHGLAKPAYEARVMALGRDLEARRRSGWLWLSTQEQVALAQLGRALLVDQKKQVSGTLYVGKQREEIAASRLIGRSFDAAALARGVRFVPQGDVPLYASFEVAGIPRQAPVSDDSQLLVVRRWYTVDGKPWTPGPLKEGQALIVRVSVTSKQNMPDALLTDLLPAGLEIDNFNLGETRQWADVTVDGIALSERANAADIKHEEFRDDRYVAMLQLTGGRTANLFYLVRAVTPGTYKVPPSLVEDMYRPALRGTGRVAPATVTVVQP</sequence>
<reference key="1">
    <citation type="journal article" date="2000" name="Nature">
        <title>The genome sequence of the plant pathogen Xylella fastidiosa.</title>
        <authorList>
            <person name="Simpson A.J.G."/>
            <person name="Reinach F.C."/>
            <person name="Arruda P."/>
            <person name="Abreu F.A."/>
            <person name="Acencio M."/>
            <person name="Alvarenga R."/>
            <person name="Alves L.M.C."/>
            <person name="Araya J.E."/>
            <person name="Baia G.S."/>
            <person name="Baptista C.S."/>
            <person name="Barros M.H."/>
            <person name="Bonaccorsi E.D."/>
            <person name="Bordin S."/>
            <person name="Bove J.M."/>
            <person name="Briones M.R.S."/>
            <person name="Bueno M.R.P."/>
            <person name="Camargo A.A."/>
            <person name="Camargo L.E.A."/>
            <person name="Carraro D.M."/>
            <person name="Carrer H."/>
            <person name="Colauto N.B."/>
            <person name="Colombo C."/>
            <person name="Costa F.F."/>
            <person name="Costa M.C.R."/>
            <person name="Costa-Neto C.M."/>
            <person name="Coutinho L.L."/>
            <person name="Cristofani M."/>
            <person name="Dias-Neto E."/>
            <person name="Docena C."/>
            <person name="El-Dorry H."/>
            <person name="Facincani A.P."/>
            <person name="Ferreira A.J.S."/>
            <person name="Ferreira V.C.A."/>
            <person name="Ferro J.A."/>
            <person name="Fraga J.S."/>
            <person name="Franca S.C."/>
            <person name="Franco M.C."/>
            <person name="Frohme M."/>
            <person name="Furlan L.R."/>
            <person name="Garnier M."/>
            <person name="Goldman G.H."/>
            <person name="Goldman M.H.S."/>
            <person name="Gomes S.L."/>
            <person name="Gruber A."/>
            <person name="Ho P.L."/>
            <person name="Hoheisel J.D."/>
            <person name="Junqueira M.L."/>
            <person name="Kemper E.L."/>
            <person name="Kitajima J.P."/>
            <person name="Krieger J.E."/>
            <person name="Kuramae E.E."/>
            <person name="Laigret F."/>
            <person name="Lambais M.R."/>
            <person name="Leite L.C.C."/>
            <person name="Lemos E.G.M."/>
            <person name="Lemos M.V.F."/>
            <person name="Lopes S.A."/>
            <person name="Lopes C.R."/>
            <person name="Machado J.A."/>
            <person name="Machado M.A."/>
            <person name="Madeira A.M.B.N."/>
            <person name="Madeira H.M.F."/>
            <person name="Marino C.L."/>
            <person name="Marques M.V."/>
            <person name="Martins E.A.L."/>
            <person name="Martins E.M.F."/>
            <person name="Matsukuma A.Y."/>
            <person name="Menck C.F.M."/>
            <person name="Miracca E.C."/>
            <person name="Miyaki C.Y."/>
            <person name="Monteiro-Vitorello C.B."/>
            <person name="Moon D.H."/>
            <person name="Nagai M.A."/>
            <person name="Nascimento A.L.T.O."/>
            <person name="Netto L.E.S."/>
            <person name="Nhani A. Jr."/>
            <person name="Nobrega F.G."/>
            <person name="Nunes L.R."/>
            <person name="Oliveira M.A."/>
            <person name="de Oliveira M.C."/>
            <person name="de Oliveira R.C."/>
            <person name="Palmieri D.A."/>
            <person name="Paris A."/>
            <person name="Peixoto B.R."/>
            <person name="Pereira G.A.G."/>
            <person name="Pereira H.A. Jr."/>
            <person name="Pesquero J.B."/>
            <person name="Quaggio R.B."/>
            <person name="Roberto P.G."/>
            <person name="Rodrigues V."/>
            <person name="de Rosa A.J.M."/>
            <person name="de Rosa V.E. Jr."/>
            <person name="de Sa R.G."/>
            <person name="Santelli R.V."/>
            <person name="Sawasaki H.E."/>
            <person name="da Silva A.C.R."/>
            <person name="da Silva A.M."/>
            <person name="da Silva F.R."/>
            <person name="Silva W.A. Jr."/>
            <person name="da Silveira J.F."/>
            <person name="Silvestri M.L.Z."/>
            <person name="Siqueira W.J."/>
            <person name="de Souza A.A."/>
            <person name="de Souza A.P."/>
            <person name="Terenzi M.F."/>
            <person name="Truffi D."/>
            <person name="Tsai S.M."/>
            <person name="Tsuhako M.H."/>
            <person name="Vallada H."/>
            <person name="Van Sluys M.A."/>
            <person name="Verjovski-Almeida S."/>
            <person name="Vettore A.L."/>
            <person name="Zago M.A."/>
            <person name="Zatz M."/>
            <person name="Meidanis J."/>
            <person name="Setubal J.C."/>
        </authorList>
    </citation>
    <scope>NUCLEOTIDE SEQUENCE [LARGE SCALE GENOMIC DNA]</scope>
    <source>
        <strain>9a5c</strain>
    </source>
</reference>
<name>A2MG_XYLFA</name>
<evidence type="ECO:0000250" key="1">
    <source>
        <dbReference type="UniProtKB" id="P76578"/>
    </source>
</evidence>
<evidence type="ECO:0000255" key="2">
    <source>
        <dbReference type="PROSITE-ProRule" id="PRU00303"/>
    </source>
</evidence>
<evidence type="ECO:0000305" key="3"/>
<keyword id="KW-1003">Cell membrane</keyword>
<keyword id="KW-0449">Lipoprotein</keyword>
<keyword id="KW-0472">Membrane</keyword>
<keyword id="KW-0564">Palmitate</keyword>
<keyword id="KW-0646">Protease inhibitor</keyword>
<keyword id="KW-0732">Signal</keyword>
<keyword id="KW-0882">Thioester bond</keyword>
<protein>
    <recommendedName>
        <fullName evidence="1">Alpha-2-macroglobulin</fullName>
    </recommendedName>
</protein>
<proteinExistence type="inferred from homology"/>
<accession>Q9PDX7</accession>
<comment type="function">
    <text evidence="1">Protects the bacterial cell from host peptidases.</text>
</comment>
<comment type="subcellular location">
    <subcellularLocation>
        <location evidence="2">Cell membrane</location>
        <topology evidence="2">Lipid-anchor</topology>
    </subcellularLocation>
</comment>
<comment type="similarity">
    <text evidence="3">Belongs to the protease inhibitor I39 (alpha-2-macroglobulin) family. Bacterial alpha-2-macroglobulin subfamily.</text>
</comment>
<feature type="signal peptide" evidence="2">
    <location>
        <begin position="1"/>
        <end position="31"/>
    </location>
</feature>
<feature type="chain" id="PRO_0000036246" description="Alpha-2-macroglobulin" evidence="2">
    <location>
        <begin position="32"/>
        <end position="1641"/>
    </location>
</feature>
<feature type="lipid moiety-binding region" description="N-palmitoyl cysteine" evidence="2">
    <location>
        <position position="32"/>
    </location>
</feature>
<feature type="lipid moiety-binding region" description="S-diacylglycerol cysteine" evidence="2">
    <location>
        <position position="32"/>
    </location>
</feature>
<feature type="cross-link" description="Isoglutamyl cysteine thioester (Cys-Gln)" evidence="1">
    <location>
        <begin position="1166"/>
        <end position="1169"/>
    </location>
</feature>